<evidence type="ECO:0000255" key="1">
    <source>
        <dbReference type="HAMAP-Rule" id="MF_00073"/>
    </source>
</evidence>
<gene>
    <name evidence="1" type="primary">nusB</name>
    <name type="ordered locus">Arad_1762</name>
</gene>
<proteinExistence type="inferred from homology"/>
<accession>B9JCY3</accession>
<name>NUSB_RHIR8</name>
<dbReference type="EMBL" id="CP000628">
    <property type="protein sequence ID" value="ACM26120.1"/>
    <property type="molecule type" value="Genomic_DNA"/>
</dbReference>
<dbReference type="RefSeq" id="WP_007692786.1">
    <property type="nucleotide sequence ID" value="NC_011985.1"/>
</dbReference>
<dbReference type="SMR" id="B9JCY3"/>
<dbReference type="STRING" id="311403.Arad_1762"/>
<dbReference type="GeneID" id="86847998"/>
<dbReference type="KEGG" id="ara:Arad_1762"/>
<dbReference type="eggNOG" id="COG0781">
    <property type="taxonomic scope" value="Bacteria"/>
</dbReference>
<dbReference type="HOGENOM" id="CLU_087843_4_0_5"/>
<dbReference type="Proteomes" id="UP000001600">
    <property type="component" value="Chromosome 1"/>
</dbReference>
<dbReference type="GO" id="GO:0005829">
    <property type="term" value="C:cytosol"/>
    <property type="evidence" value="ECO:0007669"/>
    <property type="project" value="TreeGrafter"/>
</dbReference>
<dbReference type="GO" id="GO:0003723">
    <property type="term" value="F:RNA binding"/>
    <property type="evidence" value="ECO:0007669"/>
    <property type="project" value="UniProtKB-UniRule"/>
</dbReference>
<dbReference type="GO" id="GO:0006353">
    <property type="term" value="P:DNA-templated transcription termination"/>
    <property type="evidence" value="ECO:0007669"/>
    <property type="project" value="UniProtKB-UniRule"/>
</dbReference>
<dbReference type="GO" id="GO:0031564">
    <property type="term" value="P:transcription antitermination"/>
    <property type="evidence" value="ECO:0007669"/>
    <property type="project" value="UniProtKB-KW"/>
</dbReference>
<dbReference type="Gene3D" id="1.10.940.10">
    <property type="entry name" value="NusB-like"/>
    <property type="match status" value="1"/>
</dbReference>
<dbReference type="HAMAP" id="MF_00073">
    <property type="entry name" value="NusB"/>
    <property type="match status" value="1"/>
</dbReference>
<dbReference type="InterPro" id="IPR035926">
    <property type="entry name" value="NusB-like_sf"/>
</dbReference>
<dbReference type="InterPro" id="IPR011605">
    <property type="entry name" value="NusB_fam"/>
</dbReference>
<dbReference type="InterPro" id="IPR006027">
    <property type="entry name" value="NusB_RsmB_TIM44"/>
</dbReference>
<dbReference type="NCBIfam" id="TIGR01951">
    <property type="entry name" value="nusB"/>
    <property type="match status" value="1"/>
</dbReference>
<dbReference type="PANTHER" id="PTHR11078:SF3">
    <property type="entry name" value="ANTITERMINATION NUSB DOMAIN-CONTAINING PROTEIN"/>
    <property type="match status" value="1"/>
</dbReference>
<dbReference type="PANTHER" id="PTHR11078">
    <property type="entry name" value="N UTILIZATION SUBSTANCE PROTEIN B-RELATED"/>
    <property type="match status" value="1"/>
</dbReference>
<dbReference type="Pfam" id="PF01029">
    <property type="entry name" value="NusB"/>
    <property type="match status" value="1"/>
</dbReference>
<dbReference type="SUPFAM" id="SSF48013">
    <property type="entry name" value="NusB-like"/>
    <property type="match status" value="1"/>
</dbReference>
<sequence>MSNQDNERPAKTANQRGAARLAAVQALYQMDIGGTGVLEVVAEYEAHRLGQELDGDTYLKADASWFRSIVSGVVREQTRLDPLIGSALQDDWALSRLDSTVRAILRAGTFEILDRKDVPVAVIVTEYVEIAHAFFDDDEPKLVNAVLDRIAKQVRGEAKK</sequence>
<comment type="function">
    <text evidence="1">Involved in transcription antitermination. Required for transcription of ribosomal RNA (rRNA) genes. Binds specifically to the boxA antiterminator sequence of the ribosomal RNA (rrn) operons.</text>
</comment>
<comment type="similarity">
    <text evidence="1">Belongs to the NusB family.</text>
</comment>
<keyword id="KW-0694">RNA-binding</keyword>
<keyword id="KW-0804">Transcription</keyword>
<keyword id="KW-0889">Transcription antitermination</keyword>
<keyword id="KW-0805">Transcription regulation</keyword>
<organism>
    <name type="scientific">Rhizobium rhizogenes (strain K84 / ATCC BAA-868)</name>
    <name type="common">Agrobacterium radiobacter</name>
    <dbReference type="NCBI Taxonomy" id="311403"/>
    <lineage>
        <taxon>Bacteria</taxon>
        <taxon>Pseudomonadati</taxon>
        <taxon>Pseudomonadota</taxon>
        <taxon>Alphaproteobacteria</taxon>
        <taxon>Hyphomicrobiales</taxon>
        <taxon>Rhizobiaceae</taxon>
        <taxon>Rhizobium/Agrobacterium group</taxon>
        <taxon>Rhizobium</taxon>
    </lineage>
</organism>
<reference key="1">
    <citation type="journal article" date="2009" name="J. Bacteriol.">
        <title>Genome sequences of three Agrobacterium biovars help elucidate the evolution of multichromosome genomes in bacteria.</title>
        <authorList>
            <person name="Slater S.C."/>
            <person name="Goldman B.S."/>
            <person name="Goodner B."/>
            <person name="Setubal J.C."/>
            <person name="Farrand S.K."/>
            <person name="Nester E.W."/>
            <person name="Burr T.J."/>
            <person name="Banta L."/>
            <person name="Dickerman A.W."/>
            <person name="Paulsen I."/>
            <person name="Otten L."/>
            <person name="Suen G."/>
            <person name="Welch R."/>
            <person name="Almeida N.F."/>
            <person name="Arnold F."/>
            <person name="Burton O.T."/>
            <person name="Du Z."/>
            <person name="Ewing A."/>
            <person name="Godsy E."/>
            <person name="Heisel S."/>
            <person name="Houmiel K.L."/>
            <person name="Jhaveri J."/>
            <person name="Lu J."/>
            <person name="Miller N.M."/>
            <person name="Norton S."/>
            <person name="Chen Q."/>
            <person name="Phoolcharoen W."/>
            <person name="Ohlin V."/>
            <person name="Ondrusek D."/>
            <person name="Pride N."/>
            <person name="Stricklin S.L."/>
            <person name="Sun J."/>
            <person name="Wheeler C."/>
            <person name="Wilson L."/>
            <person name="Zhu H."/>
            <person name="Wood D.W."/>
        </authorList>
    </citation>
    <scope>NUCLEOTIDE SEQUENCE [LARGE SCALE GENOMIC DNA]</scope>
    <source>
        <strain>K84 / ATCC BAA-868</strain>
    </source>
</reference>
<feature type="chain" id="PRO_1000118106" description="Transcription antitermination protein NusB">
    <location>
        <begin position="1"/>
        <end position="160"/>
    </location>
</feature>
<protein>
    <recommendedName>
        <fullName evidence="1">Transcription antitermination protein NusB</fullName>
    </recommendedName>
    <alternativeName>
        <fullName evidence="1">Antitermination factor NusB</fullName>
    </alternativeName>
</protein>